<sequence>MEYQGQQHGRVDEYGNPVAGHGVGTGMGTHGGVGTGAAAGGHYQPMRDEHQTGRGILHRSGSSSSSSSEDDGMGGRRKKGIKEKIKEKLPGGHGDQQHNAGTYGYGQQGTGMAGTGGTYGQQGHTGMTGMGATDGTYGQQGHTGMAGTGAHGTAATGGTYGQQGHTGMTGTGMHGTGGTYGQQGHTGMTGTGMHGTGGTYGQHGTDTGEKKGIMDKIKEKLPGQH</sequence>
<protein>
    <recommendedName>
        <fullName>Dehydrin DHN4</fullName>
    </recommendedName>
    <alternativeName>
        <fullName>B18</fullName>
    </alternativeName>
</protein>
<organism>
    <name type="scientific">Hordeum vulgare</name>
    <name type="common">Barley</name>
    <dbReference type="NCBI Taxonomy" id="4513"/>
    <lineage>
        <taxon>Eukaryota</taxon>
        <taxon>Viridiplantae</taxon>
        <taxon>Streptophyta</taxon>
        <taxon>Embryophyta</taxon>
        <taxon>Tracheophyta</taxon>
        <taxon>Spermatophyta</taxon>
        <taxon>Magnoliopsida</taxon>
        <taxon>Liliopsida</taxon>
        <taxon>Poales</taxon>
        <taxon>Poaceae</taxon>
        <taxon>BOP clade</taxon>
        <taxon>Pooideae</taxon>
        <taxon>Triticodae</taxon>
        <taxon>Triticeae</taxon>
        <taxon>Hordeinae</taxon>
        <taxon>Hordeum</taxon>
    </lineage>
</organism>
<reference key="1">
    <citation type="journal article" date="1989" name="Plant Mol. Biol.">
        <title>A cDNA-based comparison of dehydration-induced proteins (dehydrins) in barley and corn.</title>
        <authorList>
            <person name="Close T.J."/>
            <person name="Kortt A.A."/>
            <person name="Chandler P.M."/>
        </authorList>
    </citation>
    <scope>NUCLEOTIDE SEQUENCE [MRNA]</scope>
    <source>
        <strain>cv. Himalaya</strain>
        <tissue>Seedling</tissue>
    </source>
</reference>
<name>DHN4_HORVU</name>
<evidence type="ECO:0000256" key="1">
    <source>
        <dbReference type="SAM" id="MobiDB-lite"/>
    </source>
</evidence>
<evidence type="ECO:0000305" key="2"/>
<gene>
    <name type="primary">DHN4</name>
</gene>
<comment type="induction">
    <text>By abscisic acid (ABA) and water stress.</text>
</comment>
<comment type="similarity">
    <text evidence="2">Belongs to the plant dehydrin family.</text>
</comment>
<keyword id="KW-0677">Repeat</keyword>
<keyword id="KW-0346">Stress response</keyword>
<feature type="chain" id="PRO_0000100049" description="Dehydrin DHN4">
    <location>
        <begin position="1"/>
        <end position="225"/>
    </location>
</feature>
<feature type="repeat" description="1">
    <location>
        <begin position="105"/>
        <end position="118"/>
    </location>
</feature>
<feature type="repeat" description="2">
    <location>
        <begin position="119"/>
        <end position="136"/>
    </location>
</feature>
<feature type="repeat" description="3">
    <location>
        <begin position="137"/>
        <end position="159"/>
    </location>
</feature>
<feature type="repeat" description="4">
    <location>
        <begin position="160"/>
        <end position="178"/>
    </location>
</feature>
<feature type="repeat" description="5">
    <location>
        <begin position="179"/>
        <end position="199"/>
    </location>
</feature>
<feature type="region of interest" description="Disordered" evidence="1">
    <location>
        <begin position="1"/>
        <end position="78"/>
    </location>
</feature>
<feature type="region of interest" description="5 X approximate tandem repeats">
    <location>
        <begin position="105"/>
        <end position="199"/>
    </location>
</feature>
<feature type="compositionally biased region" description="Gly residues" evidence="1">
    <location>
        <begin position="21"/>
        <end position="39"/>
    </location>
</feature>
<proteinExistence type="evidence at transcript level"/>
<accession>P12949</accession>
<dbReference type="EMBL" id="X15287">
    <property type="protein sequence ID" value="CAA33361.1"/>
    <property type="molecule type" value="mRNA"/>
</dbReference>
<dbReference type="PIR" id="S05546">
    <property type="entry name" value="S05546"/>
</dbReference>
<dbReference type="ExpressionAtlas" id="P12949">
    <property type="expression patterns" value="baseline and differential"/>
</dbReference>
<dbReference type="GO" id="GO:0005829">
    <property type="term" value="C:cytosol"/>
    <property type="evidence" value="ECO:0007669"/>
    <property type="project" value="TreeGrafter"/>
</dbReference>
<dbReference type="GO" id="GO:0009631">
    <property type="term" value="P:cold acclimation"/>
    <property type="evidence" value="ECO:0007669"/>
    <property type="project" value="TreeGrafter"/>
</dbReference>
<dbReference type="GO" id="GO:0009737">
    <property type="term" value="P:response to abscisic acid"/>
    <property type="evidence" value="ECO:0007669"/>
    <property type="project" value="TreeGrafter"/>
</dbReference>
<dbReference type="GO" id="GO:0009414">
    <property type="term" value="P:response to water deprivation"/>
    <property type="evidence" value="ECO:0007669"/>
    <property type="project" value="TreeGrafter"/>
</dbReference>
<dbReference type="InterPro" id="IPR000167">
    <property type="entry name" value="Dehydrin"/>
</dbReference>
<dbReference type="InterPro" id="IPR030513">
    <property type="entry name" value="Dehydrin_CS"/>
</dbReference>
<dbReference type="PANTHER" id="PTHR33346:SF57">
    <property type="entry name" value="DEHYDRIN RAB16B"/>
    <property type="match status" value="1"/>
</dbReference>
<dbReference type="PANTHER" id="PTHR33346">
    <property type="entry name" value="DEHYDRIN XERO 2-RELATED"/>
    <property type="match status" value="1"/>
</dbReference>
<dbReference type="Pfam" id="PF00257">
    <property type="entry name" value="Dehydrin"/>
    <property type="match status" value="2"/>
</dbReference>
<dbReference type="PROSITE" id="PS00315">
    <property type="entry name" value="DEHYDRIN_1"/>
    <property type="match status" value="1"/>
</dbReference>
<dbReference type="PROSITE" id="PS00823">
    <property type="entry name" value="DEHYDRIN_2"/>
    <property type="match status" value="2"/>
</dbReference>